<gene>
    <name type="primary">DI19-2</name>
    <name type="ordered locus">Os05g0358000</name>
    <name type="ordered locus">LOC_Os05g28980</name>
    <name type="ORF">OJ1045_C06.9</name>
    <name type="ORF">OsJ_017460</name>
</gene>
<organism>
    <name type="scientific">Oryza sativa subsp. japonica</name>
    <name type="common">Rice</name>
    <dbReference type="NCBI Taxonomy" id="39947"/>
    <lineage>
        <taxon>Eukaryota</taxon>
        <taxon>Viridiplantae</taxon>
        <taxon>Streptophyta</taxon>
        <taxon>Embryophyta</taxon>
        <taxon>Tracheophyta</taxon>
        <taxon>Spermatophyta</taxon>
        <taxon>Magnoliopsida</taxon>
        <taxon>Liliopsida</taxon>
        <taxon>Poales</taxon>
        <taxon>Poaceae</taxon>
        <taxon>BOP clade</taxon>
        <taxon>Oryzoideae</taxon>
        <taxon>Oryzeae</taxon>
        <taxon>Oryzinae</taxon>
        <taxon>Oryza</taxon>
        <taxon>Oryza sativa</taxon>
    </lineage>
</organism>
<sequence>MDAGDAWGRSSSSSSSAAAAARRLQARYDLYMGFDDADAAGVEEVEARGGGEAYNCPFCGEDFDFVAFCCHVDDEHAVEAKSGVCPICATRVGVDLIGHLTMQHGSYFKMQRRRRVRKISSGSHSLLSLLRKDLRDGSLQSFLGGSSYVSNPPAAAPDPFLSSLICSLPVAEPSKDLHSDSSDNNFLLNKFPDDKTAERAEPSLSEKDQKERAQRSKFVRGLVLSTIFEDDNL</sequence>
<comment type="similarity">
    <text evidence="2">Belongs to the Di19 family.</text>
</comment>
<comment type="sequence caution" evidence="2">
    <conflict type="erroneous gene model prediction">
        <sequence resource="EMBL-CDS" id="AAV43851"/>
    </conflict>
</comment>
<protein>
    <recommendedName>
        <fullName>Protein DEHYDRATION-INDUCED 19 homolog 2</fullName>
    </recommendedName>
    <alternativeName>
        <fullName>OsDi19-2</fullName>
    </alternativeName>
</protein>
<name>DI192_ORYSJ</name>
<accession>Q5W794</accession>
<accession>A3B338</accession>
<accession>B7E5V8</accession>
<accession>Q0DIV9</accession>
<proteinExistence type="evidence at transcript level"/>
<keyword id="KW-1185">Reference proteome</keyword>
<evidence type="ECO:0000256" key="1">
    <source>
        <dbReference type="SAM" id="MobiDB-lite"/>
    </source>
</evidence>
<evidence type="ECO:0000305" key="2"/>
<feature type="chain" id="PRO_0000304421" description="Protein DEHYDRATION-INDUCED 19 homolog 2">
    <location>
        <begin position="1"/>
        <end position="233"/>
    </location>
</feature>
<feature type="region of interest" description="Disordered" evidence="1">
    <location>
        <begin position="176"/>
        <end position="215"/>
    </location>
</feature>
<feature type="compositionally biased region" description="Basic and acidic residues" evidence="1">
    <location>
        <begin position="191"/>
        <end position="214"/>
    </location>
</feature>
<dbReference type="EMBL" id="AC104272">
    <property type="protein sequence ID" value="AAV43851.1"/>
    <property type="status" value="ALT_SEQ"/>
    <property type="molecule type" value="Genomic_DNA"/>
</dbReference>
<dbReference type="EMBL" id="AP008211">
    <property type="protein sequence ID" value="BAF17214.1"/>
    <property type="molecule type" value="Genomic_DNA"/>
</dbReference>
<dbReference type="EMBL" id="AP014961">
    <property type="protein sequence ID" value="BAS93586.1"/>
    <property type="molecule type" value="Genomic_DNA"/>
</dbReference>
<dbReference type="EMBL" id="CM000142">
    <property type="status" value="NOT_ANNOTATED_CDS"/>
    <property type="molecule type" value="Genomic_DNA"/>
</dbReference>
<dbReference type="EMBL" id="AK061141">
    <property type="protein sequence ID" value="BAG87755.1"/>
    <property type="molecule type" value="mRNA"/>
</dbReference>
<dbReference type="EMBL" id="AK101263">
    <property type="protein sequence ID" value="BAG94980.1"/>
    <property type="molecule type" value="mRNA"/>
</dbReference>
<dbReference type="RefSeq" id="XP_015640310.1">
    <property type="nucleotide sequence ID" value="XM_015784824.1"/>
</dbReference>
<dbReference type="FunCoup" id="Q5W794">
    <property type="interactions" value="960"/>
</dbReference>
<dbReference type="PaxDb" id="39947-Q5W794"/>
<dbReference type="EnsemblPlants" id="Os05t0358000-02">
    <property type="protein sequence ID" value="Os05t0358000-02"/>
    <property type="gene ID" value="Os05g0358000"/>
</dbReference>
<dbReference type="EnsemblPlants" id="Os05t0358000-03">
    <property type="protein sequence ID" value="Os05t0358000-03"/>
    <property type="gene ID" value="Os05g0358000"/>
</dbReference>
<dbReference type="Gramene" id="Os05t0358000-02">
    <property type="protein sequence ID" value="Os05t0358000-02"/>
    <property type="gene ID" value="Os05g0358000"/>
</dbReference>
<dbReference type="Gramene" id="Os05t0358000-03">
    <property type="protein sequence ID" value="Os05t0358000-03"/>
    <property type="gene ID" value="Os05g0358000"/>
</dbReference>
<dbReference type="KEGG" id="dosa:Os05g0358000"/>
<dbReference type="eggNOG" id="ENOG502QW9I">
    <property type="taxonomic scope" value="Eukaryota"/>
</dbReference>
<dbReference type="HOGENOM" id="CLU_072240_0_1_1"/>
<dbReference type="InParanoid" id="Q5W794"/>
<dbReference type="OMA" id="ALCCHID"/>
<dbReference type="OrthoDB" id="6270329at2759"/>
<dbReference type="Proteomes" id="UP000000763">
    <property type="component" value="Chromosome 5"/>
</dbReference>
<dbReference type="Proteomes" id="UP000007752">
    <property type="component" value="Chromosome 5"/>
</dbReference>
<dbReference type="Proteomes" id="UP000059680">
    <property type="component" value="Chromosome 5"/>
</dbReference>
<dbReference type="ExpressionAtlas" id="Q5W794">
    <property type="expression patterns" value="baseline and differential"/>
</dbReference>
<dbReference type="InterPro" id="IPR033347">
    <property type="entry name" value="DI19"/>
</dbReference>
<dbReference type="InterPro" id="IPR027935">
    <property type="entry name" value="Di19_C"/>
</dbReference>
<dbReference type="InterPro" id="IPR008598">
    <property type="entry name" value="Di19_Zn-bd"/>
</dbReference>
<dbReference type="PANTHER" id="PTHR31875">
    <property type="entry name" value="PROTEIN DEHYDRATION-INDUCED 19"/>
    <property type="match status" value="1"/>
</dbReference>
<dbReference type="PANTHER" id="PTHR31875:SF26">
    <property type="entry name" value="PROTEIN DEHYDRATION-INDUCED 19-RELATED"/>
    <property type="match status" value="1"/>
</dbReference>
<dbReference type="Pfam" id="PF14571">
    <property type="entry name" value="Di19_C"/>
    <property type="match status" value="1"/>
</dbReference>
<dbReference type="Pfam" id="PF05605">
    <property type="entry name" value="zf-Di19"/>
    <property type="match status" value="1"/>
</dbReference>
<reference key="1">
    <citation type="journal article" date="2005" name="Mol. Genet. Genomics">
        <title>A fine physical map of the rice chromosome 5.</title>
        <authorList>
            <person name="Cheng C.-H."/>
            <person name="Chung M.C."/>
            <person name="Liu S.-M."/>
            <person name="Chen S.-K."/>
            <person name="Kao F.Y."/>
            <person name="Lin S.-J."/>
            <person name="Hsiao S.-H."/>
            <person name="Tseng I.C."/>
            <person name="Hsing Y.-I.C."/>
            <person name="Wu H.-P."/>
            <person name="Chen C.-S."/>
            <person name="Shaw J.-F."/>
            <person name="Wu J."/>
            <person name="Matsumoto T."/>
            <person name="Sasaki T."/>
            <person name="Chen H.-C."/>
            <person name="Chow T.-Y."/>
        </authorList>
    </citation>
    <scope>NUCLEOTIDE SEQUENCE [LARGE SCALE GENOMIC DNA]</scope>
    <source>
        <strain>cv. Nipponbare</strain>
    </source>
</reference>
<reference key="2">
    <citation type="journal article" date="2005" name="Nature">
        <title>The map-based sequence of the rice genome.</title>
        <authorList>
            <consortium name="International rice genome sequencing project (IRGSP)"/>
        </authorList>
    </citation>
    <scope>NUCLEOTIDE SEQUENCE [LARGE SCALE GENOMIC DNA]</scope>
    <source>
        <strain>cv. Nipponbare</strain>
    </source>
</reference>
<reference key="3">
    <citation type="journal article" date="2008" name="Nucleic Acids Res.">
        <title>The rice annotation project database (RAP-DB): 2008 update.</title>
        <authorList>
            <consortium name="The rice annotation project (RAP)"/>
        </authorList>
    </citation>
    <scope>GENOME REANNOTATION</scope>
    <source>
        <strain>cv. Nipponbare</strain>
    </source>
</reference>
<reference key="4">
    <citation type="journal article" date="2013" name="Rice">
        <title>Improvement of the Oryza sativa Nipponbare reference genome using next generation sequence and optical map data.</title>
        <authorList>
            <person name="Kawahara Y."/>
            <person name="de la Bastide M."/>
            <person name="Hamilton J.P."/>
            <person name="Kanamori H."/>
            <person name="McCombie W.R."/>
            <person name="Ouyang S."/>
            <person name="Schwartz D.C."/>
            <person name="Tanaka T."/>
            <person name="Wu J."/>
            <person name="Zhou S."/>
            <person name="Childs K.L."/>
            <person name="Davidson R.M."/>
            <person name="Lin H."/>
            <person name="Quesada-Ocampo L."/>
            <person name="Vaillancourt B."/>
            <person name="Sakai H."/>
            <person name="Lee S.S."/>
            <person name="Kim J."/>
            <person name="Numa H."/>
            <person name="Itoh T."/>
            <person name="Buell C.R."/>
            <person name="Matsumoto T."/>
        </authorList>
    </citation>
    <scope>GENOME REANNOTATION</scope>
    <source>
        <strain>cv. Nipponbare</strain>
    </source>
</reference>
<reference key="5">
    <citation type="journal article" date="2005" name="PLoS Biol.">
        <title>The genomes of Oryza sativa: a history of duplications.</title>
        <authorList>
            <person name="Yu J."/>
            <person name="Wang J."/>
            <person name="Lin W."/>
            <person name="Li S."/>
            <person name="Li H."/>
            <person name="Zhou J."/>
            <person name="Ni P."/>
            <person name="Dong W."/>
            <person name="Hu S."/>
            <person name="Zeng C."/>
            <person name="Zhang J."/>
            <person name="Zhang Y."/>
            <person name="Li R."/>
            <person name="Xu Z."/>
            <person name="Li S."/>
            <person name="Li X."/>
            <person name="Zheng H."/>
            <person name="Cong L."/>
            <person name="Lin L."/>
            <person name="Yin J."/>
            <person name="Geng J."/>
            <person name="Li G."/>
            <person name="Shi J."/>
            <person name="Liu J."/>
            <person name="Lv H."/>
            <person name="Li J."/>
            <person name="Wang J."/>
            <person name="Deng Y."/>
            <person name="Ran L."/>
            <person name="Shi X."/>
            <person name="Wang X."/>
            <person name="Wu Q."/>
            <person name="Li C."/>
            <person name="Ren X."/>
            <person name="Wang J."/>
            <person name="Wang X."/>
            <person name="Li D."/>
            <person name="Liu D."/>
            <person name="Zhang X."/>
            <person name="Ji Z."/>
            <person name="Zhao W."/>
            <person name="Sun Y."/>
            <person name="Zhang Z."/>
            <person name="Bao J."/>
            <person name="Han Y."/>
            <person name="Dong L."/>
            <person name="Ji J."/>
            <person name="Chen P."/>
            <person name="Wu S."/>
            <person name="Liu J."/>
            <person name="Xiao Y."/>
            <person name="Bu D."/>
            <person name="Tan J."/>
            <person name="Yang L."/>
            <person name="Ye C."/>
            <person name="Zhang J."/>
            <person name="Xu J."/>
            <person name="Zhou Y."/>
            <person name="Yu Y."/>
            <person name="Zhang B."/>
            <person name="Zhuang S."/>
            <person name="Wei H."/>
            <person name="Liu B."/>
            <person name="Lei M."/>
            <person name="Yu H."/>
            <person name="Li Y."/>
            <person name="Xu H."/>
            <person name="Wei S."/>
            <person name="He X."/>
            <person name="Fang L."/>
            <person name="Zhang Z."/>
            <person name="Zhang Y."/>
            <person name="Huang X."/>
            <person name="Su Z."/>
            <person name="Tong W."/>
            <person name="Li J."/>
            <person name="Tong Z."/>
            <person name="Li S."/>
            <person name="Ye J."/>
            <person name="Wang L."/>
            <person name="Fang L."/>
            <person name="Lei T."/>
            <person name="Chen C.-S."/>
            <person name="Chen H.-C."/>
            <person name="Xu Z."/>
            <person name="Li H."/>
            <person name="Huang H."/>
            <person name="Zhang F."/>
            <person name="Xu H."/>
            <person name="Li N."/>
            <person name="Zhao C."/>
            <person name="Li S."/>
            <person name="Dong L."/>
            <person name="Huang Y."/>
            <person name="Li L."/>
            <person name="Xi Y."/>
            <person name="Qi Q."/>
            <person name="Li W."/>
            <person name="Zhang B."/>
            <person name="Hu W."/>
            <person name="Zhang Y."/>
            <person name="Tian X."/>
            <person name="Jiao Y."/>
            <person name="Liang X."/>
            <person name="Jin J."/>
            <person name="Gao L."/>
            <person name="Zheng W."/>
            <person name="Hao B."/>
            <person name="Liu S.-M."/>
            <person name="Wang W."/>
            <person name="Yuan L."/>
            <person name="Cao M."/>
            <person name="McDermott J."/>
            <person name="Samudrala R."/>
            <person name="Wang J."/>
            <person name="Wong G.K.-S."/>
            <person name="Yang H."/>
        </authorList>
    </citation>
    <scope>NUCLEOTIDE SEQUENCE [LARGE SCALE GENOMIC DNA]</scope>
    <source>
        <strain>cv. Nipponbare</strain>
    </source>
</reference>
<reference key="6">
    <citation type="journal article" date="2003" name="Science">
        <title>Collection, mapping, and annotation of over 28,000 cDNA clones from japonica rice.</title>
        <authorList>
            <consortium name="The rice full-length cDNA consortium"/>
        </authorList>
    </citation>
    <scope>NUCLEOTIDE SEQUENCE [LARGE SCALE MRNA]</scope>
    <source>
        <strain>cv. Nipponbare</strain>
    </source>
</reference>
<reference key="7">
    <citation type="journal article" date="2006" name="Plant Mol. Biol.">
        <title>The Arabidopsis AtDi19 gene family encodes a novel type of Cys2/His2 zinc-finger protein implicated in ABA-independent dehydration, high-salinity stress and light signaling pathways.</title>
        <authorList>
            <person name="Rodriguez Milla M.A."/>
            <person name="Townsend J."/>
            <person name="Chang I.-F."/>
            <person name="Cushman J.C."/>
        </authorList>
    </citation>
    <scope>GENE FAMILY</scope>
    <scope>NOMENCLATURE</scope>
</reference>